<comment type="function">
    <text evidence="1">Involved in the modulation of the specificity of the ClpAP-mediated ATP-dependent protein degradation.</text>
</comment>
<comment type="subunit">
    <text evidence="1">Binds to the N-terminal domain of the chaperone ClpA.</text>
</comment>
<comment type="similarity">
    <text evidence="1">Belongs to the ClpS family.</text>
</comment>
<evidence type="ECO:0000255" key="1">
    <source>
        <dbReference type="HAMAP-Rule" id="MF_00302"/>
    </source>
</evidence>
<proteinExistence type="inferred from homology"/>
<protein>
    <recommendedName>
        <fullName evidence="1">ATP-dependent Clp protease adapter protein ClpS</fullName>
    </recommendedName>
</protein>
<organism>
    <name type="scientific">Campylobacter jejuni subsp. jejuni serotype O:6 (strain 81116 / NCTC 11828)</name>
    <dbReference type="NCBI Taxonomy" id="407148"/>
    <lineage>
        <taxon>Bacteria</taxon>
        <taxon>Pseudomonadati</taxon>
        <taxon>Campylobacterota</taxon>
        <taxon>Epsilonproteobacteria</taxon>
        <taxon>Campylobacterales</taxon>
        <taxon>Campylobacteraceae</taxon>
        <taxon>Campylobacter</taxon>
    </lineage>
</organism>
<sequence>MPKTQTLEQTKLSEPKMYKVILLNDDVTTMDFVIEILMNIFHQNLEKASQTMLEIHHNGSGICGIYTQEIALSKQKKVIDAAKLANFPLQAKVEEE</sequence>
<gene>
    <name evidence="1" type="primary">clpS</name>
    <name type="ordered locus">C8J_1048</name>
</gene>
<feature type="chain" id="PRO_1000071980" description="ATP-dependent Clp protease adapter protein ClpS">
    <location>
        <begin position="1"/>
        <end position="96"/>
    </location>
</feature>
<name>CLPS_CAMJ8</name>
<dbReference type="EMBL" id="CP000814">
    <property type="protein sequence ID" value="ABV52647.1"/>
    <property type="molecule type" value="Genomic_DNA"/>
</dbReference>
<dbReference type="RefSeq" id="WP_002856038.1">
    <property type="nucleotide sequence ID" value="NC_009839.1"/>
</dbReference>
<dbReference type="SMR" id="A8FMG0"/>
<dbReference type="KEGG" id="cju:C8J_1048"/>
<dbReference type="HOGENOM" id="CLU_134358_1_0_7"/>
<dbReference type="GO" id="GO:0030163">
    <property type="term" value="P:protein catabolic process"/>
    <property type="evidence" value="ECO:0007669"/>
    <property type="project" value="InterPro"/>
</dbReference>
<dbReference type="GO" id="GO:0006508">
    <property type="term" value="P:proteolysis"/>
    <property type="evidence" value="ECO:0007669"/>
    <property type="project" value="UniProtKB-UniRule"/>
</dbReference>
<dbReference type="FunFam" id="3.30.1390.10:FF:000002">
    <property type="entry name" value="ATP-dependent Clp protease adapter protein ClpS"/>
    <property type="match status" value="1"/>
</dbReference>
<dbReference type="Gene3D" id="3.30.1390.10">
    <property type="match status" value="1"/>
</dbReference>
<dbReference type="HAMAP" id="MF_00302">
    <property type="entry name" value="ClpS"/>
    <property type="match status" value="1"/>
</dbReference>
<dbReference type="InterPro" id="IPR022935">
    <property type="entry name" value="ClpS"/>
</dbReference>
<dbReference type="InterPro" id="IPR003769">
    <property type="entry name" value="ClpS_core"/>
</dbReference>
<dbReference type="InterPro" id="IPR014719">
    <property type="entry name" value="Ribosomal_bL12_C/ClpS-like"/>
</dbReference>
<dbReference type="PANTHER" id="PTHR33473:SF19">
    <property type="entry name" value="ATP-DEPENDENT CLP PROTEASE ADAPTER PROTEIN CLPS"/>
    <property type="match status" value="1"/>
</dbReference>
<dbReference type="PANTHER" id="PTHR33473">
    <property type="entry name" value="ATP-DEPENDENT CLP PROTEASE ADAPTER PROTEIN CLPS1, CHLOROPLASTIC"/>
    <property type="match status" value="1"/>
</dbReference>
<dbReference type="Pfam" id="PF02617">
    <property type="entry name" value="ClpS"/>
    <property type="match status" value="1"/>
</dbReference>
<dbReference type="SUPFAM" id="SSF54736">
    <property type="entry name" value="ClpS-like"/>
    <property type="match status" value="1"/>
</dbReference>
<accession>A8FMG0</accession>
<reference key="1">
    <citation type="journal article" date="2007" name="J. Bacteriol.">
        <title>The complete genome sequence of Campylobacter jejuni strain 81116 (NCTC11828).</title>
        <authorList>
            <person name="Pearson B.M."/>
            <person name="Gaskin D.J.H."/>
            <person name="Segers R.P.A.M."/>
            <person name="Wells J.M."/>
            <person name="Nuijten P.J.M."/>
            <person name="van Vliet A.H.M."/>
        </authorList>
    </citation>
    <scope>NUCLEOTIDE SEQUENCE [LARGE SCALE GENOMIC DNA]</scope>
    <source>
        <strain>81116 / NCTC 11828</strain>
    </source>
</reference>